<reference evidence="8" key="1">
    <citation type="journal article" date="2001" name="Nat. Genet.">
        <title>An abundance of X-linked genes expressed in spermatogonia.</title>
        <authorList>
            <person name="Wang P.J."/>
            <person name="McCarrey J.R."/>
            <person name="Yang F."/>
            <person name="Page D.C."/>
        </authorList>
    </citation>
    <scope>NUCLEOTIDE SEQUENCE [MRNA]</scope>
    <scope>TISSUE SPECIFICITY</scope>
    <source>
        <tissue evidence="8">Testis</tissue>
    </source>
</reference>
<reference evidence="12" key="2">
    <citation type="journal article" date="2009" name="PLoS Biol.">
        <title>Lineage-specific biology revealed by a finished genome assembly of the mouse.</title>
        <authorList>
            <person name="Church D.M."/>
            <person name="Goodstadt L."/>
            <person name="Hillier L.W."/>
            <person name="Zody M.C."/>
            <person name="Goldstein S."/>
            <person name="She X."/>
            <person name="Bult C.J."/>
            <person name="Agarwala R."/>
            <person name="Cherry J.L."/>
            <person name="DiCuccio M."/>
            <person name="Hlavina W."/>
            <person name="Kapustin Y."/>
            <person name="Meric P."/>
            <person name="Maglott D."/>
            <person name="Birtle Z."/>
            <person name="Marques A.C."/>
            <person name="Graves T."/>
            <person name="Zhou S."/>
            <person name="Teague B."/>
            <person name="Potamousis K."/>
            <person name="Churas C."/>
            <person name="Place M."/>
            <person name="Herschleb J."/>
            <person name="Runnheim R."/>
            <person name="Forrest D."/>
            <person name="Amos-Landgraf J."/>
            <person name="Schwartz D.C."/>
            <person name="Cheng Z."/>
            <person name="Lindblad-Toh K."/>
            <person name="Eichler E.E."/>
            <person name="Ponting C.P."/>
        </authorList>
    </citation>
    <scope>NUCLEOTIDE SEQUENCE [LARGE SCALE GENOMIC DNA]</scope>
    <source>
        <strain>C57BL/6J</strain>
    </source>
</reference>
<reference evidence="9" key="3">
    <citation type="journal article" date="2005" name="Science">
        <title>The transcriptional landscape of the mammalian genome.</title>
        <authorList>
            <person name="Carninci P."/>
            <person name="Kasukawa T."/>
            <person name="Katayama S."/>
            <person name="Gough J."/>
            <person name="Frith M.C."/>
            <person name="Maeda N."/>
            <person name="Oyama R."/>
            <person name="Ravasi T."/>
            <person name="Lenhard B."/>
            <person name="Wells C."/>
            <person name="Kodzius R."/>
            <person name="Shimokawa K."/>
            <person name="Bajic V.B."/>
            <person name="Brenner S.E."/>
            <person name="Batalov S."/>
            <person name="Forrest A.R."/>
            <person name="Zavolan M."/>
            <person name="Davis M.J."/>
            <person name="Wilming L.G."/>
            <person name="Aidinis V."/>
            <person name="Allen J.E."/>
            <person name="Ambesi-Impiombato A."/>
            <person name="Apweiler R."/>
            <person name="Aturaliya R.N."/>
            <person name="Bailey T.L."/>
            <person name="Bansal M."/>
            <person name="Baxter L."/>
            <person name="Beisel K.W."/>
            <person name="Bersano T."/>
            <person name="Bono H."/>
            <person name="Chalk A.M."/>
            <person name="Chiu K.P."/>
            <person name="Choudhary V."/>
            <person name="Christoffels A."/>
            <person name="Clutterbuck D.R."/>
            <person name="Crowe M.L."/>
            <person name="Dalla E."/>
            <person name="Dalrymple B.P."/>
            <person name="de Bono B."/>
            <person name="Della Gatta G."/>
            <person name="di Bernardo D."/>
            <person name="Down T."/>
            <person name="Engstrom P."/>
            <person name="Fagiolini M."/>
            <person name="Faulkner G."/>
            <person name="Fletcher C.F."/>
            <person name="Fukushima T."/>
            <person name="Furuno M."/>
            <person name="Futaki S."/>
            <person name="Gariboldi M."/>
            <person name="Georgii-Hemming P."/>
            <person name="Gingeras T.R."/>
            <person name="Gojobori T."/>
            <person name="Green R.E."/>
            <person name="Gustincich S."/>
            <person name="Harbers M."/>
            <person name="Hayashi Y."/>
            <person name="Hensch T.K."/>
            <person name="Hirokawa N."/>
            <person name="Hill D."/>
            <person name="Huminiecki L."/>
            <person name="Iacono M."/>
            <person name="Ikeo K."/>
            <person name="Iwama A."/>
            <person name="Ishikawa T."/>
            <person name="Jakt M."/>
            <person name="Kanapin A."/>
            <person name="Katoh M."/>
            <person name="Kawasawa Y."/>
            <person name="Kelso J."/>
            <person name="Kitamura H."/>
            <person name="Kitano H."/>
            <person name="Kollias G."/>
            <person name="Krishnan S.P."/>
            <person name="Kruger A."/>
            <person name="Kummerfeld S.K."/>
            <person name="Kurochkin I.V."/>
            <person name="Lareau L.F."/>
            <person name="Lazarevic D."/>
            <person name="Lipovich L."/>
            <person name="Liu J."/>
            <person name="Liuni S."/>
            <person name="McWilliam S."/>
            <person name="Madan Babu M."/>
            <person name="Madera M."/>
            <person name="Marchionni L."/>
            <person name="Matsuda H."/>
            <person name="Matsuzawa S."/>
            <person name="Miki H."/>
            <person name="Mignone F."/>
            <person name="Miyake S."/>
            <person name="Morris K."/>
            <person name="Mottagui-Tabar S."/>
            <person name="Mulder N."/>
            <person name="Nakano N."/>
            <person name="Nakauchi H."/>
            <person name="Ng P."/>
            <person name="Nilsson R."/>
            <person name="Nishiguchi S."/>
            <person name="Nishikawa S."/>
            <person name="Nori F."/>
            <person name="Ohara O."/>
            <person name="Okazaki Y."/>
            <person name="Orlando V."/>
            <person name="Pang K.C."/>
            <person name="Pavan W.J."/>
            <person name="Pavesi G."/>
            <person name="Pesole G."/>
            <person name="Petrovsky N."/>
            <person name="Piazza S."/>
            <person name="Reed J."/>
            <person name="Reid J.F."/>
            <person name="Ring B.Z."/>
            <person name="Ringwald M."/>
            <person name="Rost B."/>
            <person name="Ruan Y."/>
            <person name="Salzberg S.L."/>
            <person name="Sandelin A."/>
            <person name="Schneider C."/>
            <person name="Schoenbach C."/>
            <person name="Sekiguchi K."/>
            <person name="Semple C.A."/>
            <person name="Seno S."/>
            <person name="Sessa L."/>
            <person name="Sheng Y."/>
            <person name="Shibata Y."/>
            <person name="Shimada H."/>
            <person name="Shimada K."/>
            <person name="Silva D."/>
            <person name="Sinclair B."/>
            <person name="Sperling S."/>
            <person name="Stupka E."/>
            <person name="Sugiura K."/>
            <person name="Sultana R."/>
            <person name="Takenaka Y."/>
            <person name="Taki K."/>
            <person name="Tammoja K."/>
            <person name="Tan S.L."/>
            <person name="Tang S."/>
            <person name="Taylor M.S."/>
            <person name="Tegner J."/>
            <person name="Teichmann S.A."/>
            <person name="Ueda H.R."/>
            <person name="van Nimwegen E."/>
            <person name="Verardo R."/>
            <person name="Wei C.L."/>
            <person name="Yagi K."/>
            <person name="Yamanishi H."/>
            <person name="Zabarovsky E."/>
            <person name="Zhu S."/>
            <person name="Zimmer A."/>
            <person name="Hide W."/>
            <person name="Bult C."/>
            <person name="Grimmond S.M."/>
            <person name="Teasdale R.D."/>
            <person name="Liu E.T."/>
            <person name="Brusic V."/>
            <person name="Quackenbush J."/>
            <person name="Wahlestedt C."/>
            <person name="Mattick J.S."/>
            <person name="Hume D.A."/>
            <person name="Kai C."/>
            <person name="Sasaki D."/>
            <person name="Tomaru Y."/>
            <person name="Fukuda S."/>
            <person name="Kanamori-Katayama M."/>
            <person name="Suzuki M."/>
            <person name="Aoki J."/>
            <person name="Arakawa T."/>
            <person name="Iida J."/>
            <person name="Imamura K."/>
            <person name="Itoh M."/>
            <person name="Kato T."/>
            <person name="Kawaji H."/>
            <person name="Kawagashira N."/>
            <person name="Kawashima T."/>
            <person name="Kojima M."/>
            <person name="Kondo S."/>
            <person name="Konno H."/>
            <person name="Nakano K."/>
            <person name="Ninomiya N."/>
            <person name="Nishio T."/>
            <person name="Okada M."/>
            <person name="Plessy C."/>
            <person name="Shibata K."/>
            <person name="Shiraki T."/>
            <person name="Suzuki S."/>
            <person name="Tagami M."/>
            <person name="Waki K."/>
            <person name="Watahiki A."/>
            <person name="Okamura-Oho Y."/>
            <person name="Suzuki H."/>
            <person name="Kawai J."/>
            <person name="Hayashizaki Y."/>
        </authorList>
    </citation>
    <scope>NUCLEOTIDE SEQUENCE [LARGE SCALE MRNA] OF 1-1005 (ISOFORM 2)</scope>
    <scope>NUCLEOTIDE SEQUENCE [LARGE SCALE MRNA] OF 1086-1789 (ISOFORM 1/2)</scope>
    <source>
        <strain evidence="9">C57BL/6J</strain>
        <tissue evidence="10">Ovary</tissue>
        <tissue evidence="9">Testis</tissue>
    </source>
</reference>
<reference key="4">
    <citation type="journal article" date="2008" name="J. Cell Biol.">
        <title>Mouse TEX15 is essential for DNA double-strand break repair and chromosomal synapsis during male meiosis.</title>
        <authorList>
            <person name="Yang F."/>
            <person name="Eckardt S."/>
            <person name="Leu N.A."/>
            <person name="McLaughlin K.J."/>
            <person name="Wang P.J."/>
        </authorList>
    </citation>
    <scope>FUNCTION</scope>
    <scope>SUBCELLULAR LOCATION</scope>
    <scope>DISRUPTION PHENOTYPE</scope>
</reference>
<reference key="5">
    <citation type="journal article" date="2020" name="Genes Dev.">
        <title>TEX15 associates with MILI and silences transposable elements in male germ cells.</title>
        <authorList>
            <person name="Yang F."/>
            <person name="Lan Y."/>
            <person name="Pandey R.R."/>
            <person name="Homolka D."/>
            <person name="Berger S.L."/>
            <person name="Pillai R.S."/>
            <person name="Bartolomei M.S."/>
            <person name="Wang P.J."/>
        </authorList>
    </citation>
    <scope>FUNCTION</scope>
    <scope>SUBCELLULAR LOCATION</scope>
    <scope>INTERACTION WITH PIWIL2</scope>
    <scope>DISRUPTION PHENOTYPE</scope>
    <scope>TISSUE SPECIFICITY</scope>
    <scope>DEVELOPMENTAL STAGE</scope>
</reference>
<reference key="6">
    <citation type="journal article" date="2020" name="Nat. Commun.">
        <title>TEX15 is an essential executor of MIWI2-directed transposon DNA methylation and silencing.</title>
        <authorList>
            <person name="Schoepp T."/>
            <person name="Zoch A."/>
            <person name="Berrens R.V."/>
            <person name="Auchynnikava T."/>
            <person name="Kabayama Y."/>
            <person name="Vasiliauskaite L."/>
            <person name="Rappsilber J."/>
            <person name="Allshire R.C."/>
            <person name="O'Carroll D."/>
        </authorList>
    </citation>
    <scope>FUNCTION</scope>
    <scope>SUBCELLULAR LOCATION</scope>
    <scope>INTERACTION WITH PIWIL4</scope>
    <scope>DISRUPTION PHENOTYPE</scope>
    <scope>TISSUE SPECIFICITY</scope>
    <scope>DEVELOPMENTAL STAGE</scope>
</reference>
<sequence>MTYFFIYVSTERACSLNNCTIAKRIGKGKDATVIFEHFRKPVDPFVQENCPCKALNSEMGPFSSDTSSSYGNVQNGNNSVLEAYNRQTENSSNLRDASQVYTHNSGFSFIPTGNTASGNGDLFSVTYLRSILSSISAAFPSHNNTGSSTVITSKLIKDPRLMKREQSMRNKSDTAGLSDVLPLDKSLGCGDSQIKLTCMPTSSISSSEVPADNTITSCLNASCFKFSSESSHYQAHNSSSKGHDCIASSSIAVTEQFKEQHSSSFPSSLSNAFSDVRKQKHSEEQVQRAQMRSNVPVLTALSSESRNSDESENTCSNDSQGHFSQESPSSDINSIYKVGHQMSTVFPAQKKGNLCEYIQDTGMMRASISTEDSTKDGVNHTWCKETVLSNETVSSPIDNSNTLYQEHKEGGNLNSLSGNCEKIGVTHKLQVPKFPISSTGDKNELYRAALELECSLTPTIECLSQKYPQHSLEHEDNTNFAMTQGLIELKTVQNNQNFGNILSDAFQEAKDVPLASEKLIDRVISSAAIDISLDSSVCNIIGEYTCVRRENENGEASPYNCHKEEASRVKDGVQDHSLSYDAELSCDLNLKINLQEQRDDKNPNEAKEHNTDNINGSEKQDCLANDHFTNIVEMREIKSNTEVEILNSEECFTFNSFRGKNGKPAETASSESEAVEQRHAPNDQRGLEHLVSSFPEIEGSSVCVASNATKQIVGTTVLTVSTSLGDHQKDELKEICSSESSDLGLVKHSISECEIDTDKDKLQDFHQLVNENSALKTGLGSEIEVDLEHDNASVFQQNMHSQGNDLCEEFELYESLKSRIDWEGLFGSSYEEIESSSFARREGTDQHSSTECNCVSFCSQDKRELHNPIFLPDLQVTITNLLSLRISPTDESLELKDNFYKQVTESTEPETNKEGNASGFGMCSQPSGENSSFSCANKFGNSVQESGDVSKSESSHSSNSSHNTHVDQGSGKPNNDSLSTEPSNVTVMNDKSKCPTKSKPVFNDTRNKKDMQSRSSKRTLHASSSRGQNIANKDLREHETHEKKRRPTSHGSSDRFSSLSQGRIKTFSQSEKHIRNVLNILNNEASLCKSKHLSRKLNKAVLHLKKAHRRVHTSLQLISKVGQKRKGPLPKAYAVIHNNFWESCDHQGDSLMSERRYSKHFLSKRKYDKQGDKRFLRFDIEESLTPVSKHRLYRTNRERIAECLSNEVMSGHVSSSLTTFHVREFCDEEQFPEPQLPLAYTSQSISQLEYTNSIVGNESSSELEHFSETSGNMLDPKETLTEKEYQTHTQLCNSDSAKLKNHTTHSIRDIAKECNSEDKTVLCESNPVYLSFIKENTSHSPDKSYDSNCKANTDIHISVLGSKKKHILSVDIYEQDNCVSDGVKSGEAIFPIEKCTVPMETTSSIPTENIASKSYTIPPVSSILVTAGEEESSVGENGLFDVNENEMNITMHSKLDLTSVTEESKICKKNMKNLSCNDSSMLLKENITGPSKRYMAKYIEEEKIRKIEQAVYKKIITEGSPISFKYKSQNKILKEKSFHVNKKIITNNLTDSHLSIKNSTVDTIALKDIPNQLKERKEAGQIKVNNNSHSDCLSKPAIVETNHRPVLHGNPKVATLQKELKEHRSPNYTSHVTELSQILQRADEAASLQILEEETKLCQNILPLFVQAFERQQECSIDQILISRKLLVEQNLWNNCRLKLKPCAVDTWVELQMAMETIQFIENKKRFLEGKPTFRSLLWYDESLYSELLRRPRGYQLQSNFYPGFQGRLKYNAFCELQNYHNQLVEFLTETKKENNSYYALLKYKRQINECEAIMKHYSDCFDFCLSVPFACGVNFGDSLGDLETLRKSTLKLISVPGGSPKVHSYPGKKDHLWIIIEIVSSKVSFIKSNEEISIKICLYGLEHIYFDAAKSLVWKEKSCSLPKKHSEKNREMEEINERAFSKLKKIYDVLSKGLNNEPTSIGLQEDAIIASKQSTLGSISNCRLNKAWLSYPDISCVGEILDQAKSADLEELQGLTLRCTDHLEILKKYFQMLQEDNIDNIFIMEENVLDMLSNHNLGAVILKPEAIEIYIEIVMISETIHYLKNLIAKKLHNQRFRGMLWFDWSLLPELIGCQEEVVSLSVGDTQTHCLWKLVETAISVLKKELAVIYEYGEASNCSYALHLFYRELKELTGVKRLLNNSKYSVSTYIDLVPHTASVNFGNTVAELEHNYKQFFLLLKNVMSVPQKDFGKMVHIIKVMKTIEHMKLLSAKDTKLSTHLLFLQMLRNKRNALQQNRQEKMETPVTEPGEDSSQPGVSEQTPPGTECTVKNISDSSKKRPVTADTCEVSQGKGNTDTVPSWKKQKVTMKDVGNIQTVSKHPSTTGSPPNDENKIGSNSSDSLKSISASPEVVKRQSSVLGSVSPAESVQDTCTPKSESKVEPTDSLPDSLASLTEQQENSNVIEKRNGNSSVAETNDKKDCPLVTCDQKDIDASYSPDHTPAQESHKTPVDHTQISPSNLTAGNDDPLVPDASLLSVSASQSEKDVYLSGTDFHHENNKILNLSTEDCTGTSSPEPVCIKDKISVLQVDKTQPIKSESPKKSMTDAPNPNTAPFGSYGNSALNVNGTVQHTHSEQNSKVLTQKVGTSRNIPPQSACSPVHNSSAHSFGTSYPYYSWCFYQYSSSNGTAVTHTYQGMTAYEIQQPPPPVLTTVASTVQSTHFNRSYSEHFSYFPGQPQANSFNPGNGYFPSHTPVSYNYQQPVYSQFASHQPVPQATYPYPPNPGAPPQVPWTYAPWQQNPFLRRP</sequence>
<keyword id="KW-0025">Alternative splicing</keyword>
<keyword id="KW-0963">Cytoplasm</keyword>
<keyword id="KW-0221">Differentiation</keyword>
<keyword id="KW-0227">DNA damage</keyword>
<keyword id="KW-0234">DNA repair</keyword>
<keyword id="KW-0469">Meiosis</keyword>
<keyword id="KW-0539">Nucleus</keyword>
<keyword id="KW-1185">Reference proteome</keyword>
<keyword id="KW-0943">RNA-mediated gene silencing</keyword>
<keyword id="KW-0744">Spermatogenesis</keyword>
<gene>
    <name evidence="11" type="primary">Tex15</name>
</gene>
<accession>F8VPN2</accession>
<accession>Q3UPQ6</accession>
<accession>Q3V162</accession>
<accession>Q99MV3</accession>
<dbReference type="EMBL" id="AF285589">
    <property type="protein sequence ID" value="AAK31968.1"/>
    <property type="molecule type" value="mRNA"/>
</dbReference>
<dbReference type="EMBL" id="AC117807">
    <property type="status" value="NOT_ANNOTATED_CDS"/>
    <property type="molecule type" value="Genomic_DNA"/>
</dbReference>
<dbReference type="EMBL" id="AC139025">
    <property type="status" value="NOT_ANNOTATED_CDS"/>
    <property type="molecule type" value="Genomic_DNA"/>
</dbReference>
<dbReference type="EMBL" id="AK132667">
    <property type="protein sequence ID" value="BAE21290.1"/>
    <property type="molecule type" value="mRNA"/>
</dbReference>
<dbReference type="EMBL" id="AK143304">
    <property type="protein sequence ID" value="BAE25339.1"/>
    <property type="molecule type" value="mRNA"/>
</dbReference>
<dbReference type="CCDS" id="CCDS22232.1">
    <molecule id="F8VPN2-1"/>
</dbReference>
<dbReference type="RefSeq" id="NP_113551.2">
    <molecule id="F8VPN2-1"/>
    <property type="nucleotide sequence ID" value="NM_031374.2"/>
</dbReference>
<dbReference type="FunCoup" id="F8VPN2">
    <property type="interactions" value="758"/>
</dbReference>
<dbReference type="STRING" id="10090.ENSMUSP00000009772"/>
<dbReference type="iPTMnet" id="F8VPN2"/>
<dbReference type="PhosphoSitePlus" id="F8VPN2"/>
<dbReference type="PaxDb" id="10090-ENSMUSP00000009772"/>
<dbReference type="ProteomicsDB" id="262876">
    <molecule id="F8VPN2-1"/>
</dbReference>
<dbReference type="ProteomicsDB" id="262877">
    <molecule id="F8VPN2-2"/>
</dbReference>
<dbReference type="Antibodypedia" id="51904">
    <property type="antibodies" value="17 antibodies from 10 providers"/>
</dbReference>
<dbReference type="DNASU" id="104271"/>
<dbReference type="Ensembl" id="ENSMUST00000009772.8">
    <molecule id="F8VPN2-1"/>
    <property type="protein sequence ID" value="ENSMUSP00000009772.8"/>
    <property type="gene ID" value="ENSMUSG00000009628.15"/>
</dbReference>
<dbReference type="GeneID" id="104271"/>
<dbReference type="KEGG" id="mmu:104271"/>
<dbReference type="UCSC" id="uc009lkc.1">
    <molecule id="F8VPN2-1"/>
    <property type="organism name" value="mouse"/>
</dbReference>
<dbReference type="AGR" id="MGI:1934816"/>
<dbReference type="CTD" id="56154"/>
<dbReference type="MGI" id="MGI:1934816">
    <property type="gene designation" value="Tex15"/>
</dbReference>
<dbReference type="VEuPathDB" id="HostDB:ENSMUSG00000009628"/>
<dbReference type="eggNOG" id="ENOG502QW6W">
    <property type="taxonomic scope" value="Eukaryota"/>
</dbReference>
<dbReference type="GeneTree" id="ENSGT00390000006260"/>
<dbReference type="HOGENOM" id="CLU_000620_0_0_1"/>
<dbReference type="InParanoid" id="F8VPN2"/>
<dbReference type="OMA" id="DATCIAH"/>
<dbReference type="OrthoDB" id="10054471at2759"/>
<dbReference type="TreeFam" id="TF332375"/>
<dbReference type="BioGRID-ORCS" id="104271">
    <property type="hits" value="3 hits in 83 CRISPR screens"/>
</dbReference>
<dbReference type="ChiTaRS" id="Tex15">
    <property type="organism name" value="mouse"/>
</dbReference>
<dbReference type="PRO" id="PR:F8VPN2"/>
<dbReference type="Proteomes" id="UP000000589">
    <property type="component" value="Chromosome 8"/>
</dbReference>
<dbReference type="RNAct" id="F8VPN2">
    <property type="molecule type" value="protein"/>
</dbReference>
<dbReference type="Bgee" id="ENSMUSG00000009628">
    <property type="expression patterns" value="Expressed in spermatid and 130 other cell types or tissues"/>
</dbReference>
<dbReference type="ExpressionAtlas" id="F8VPN2">
    <property type="expression patterns" value="baseline and differential"/>
</dbReference>
<dbReference type="GO" id="GO:0005737">
    <property type="term" value="C:cytoplasm"/>
    <property type="evidence" value="ECO:0000314"/>
    <property type="project" value="UniProtKB"/>
</dbReference>
<dbReference type="GO" id="GO:0005634">
    <property type="term" value="C:nucleus"/>
    <property type="evidence" value="ECO:0000314"/>
    <property type="project" value="UniProtKB"/>
</dbReference>
<dbReference type="GO" id="GO:0030154">
    <property type="term" value="P:cell differentiation"/>
    <property type="evidence" value="ECO:0007669"/>
    <property type="project" value="UniProtKB-KW"/>
</dbReference>
<dbReference type="GO" id="GO:0006346">
    <property type="term" value="P:DNA methylation-dependent constitutive heterochromatin formation"/>
    <property type="evidence" value="ECO:0000315"/>
    <property type="project" value="UniProtKB"/>
</dbReference>
<dbReference type="GO" id="GO:0006281">
    <property type="term" value="P:DNA repair"/>
    <property type="evidence" value="ECO:0007669"/>
    <property type="project" value="UniProtKB-KW"/>
</dbReference>
<dbReference type="GO" id="GO:0009566">
    <property type="term" value="P:fertilization"/>
    <property type="evidence" value="ECO:0000315"/>
    <property type="project" value="MGI"/>
</dbReference>
<dbReference type="GO" id="GO:0048873">
    <property type="term" value="P:homeostasis of number of cells within a tissue"/>
    <property type="evidence" value="ECO:0000315"/>
    <property type="project" value="MGI"/>
</dbReference>
<dbReference type="GO" id="GO:0007129">
    <property type="term" value="P:homologous chromosome pairing at meiosis"/>
    <property type="evidence" value="ECO:0000315"/>
    <property type="project" value="MGI"/>
</dbReference>
<dbReference type="GO" id="GO:0030539">
    <property type="term" value="P:male genitalia development"/>
    <property type="evidence" value="ECO:0000315"/>
    <property type="project" value="MGI"/>
</dbReference>
<dbReference type="GO" id="GO:0007140">
    <property type="term" value="P:male meiotic nuclear division"/>
    <property type="evidence" value="ECO:0000315"/>
    <property type="project" value="MGI"/>
</dbReference>
<dbReference type="GO" id="GO:0034502">
    <property type="term" value="P:protein localization to chromosome"/>
    <property type="evidence" value="ECO:0000315"/>
    <property type="project" value="MGI"/>
</dbReference>
<dbReference type="GO" id="GO:0010569">
    <property type="term" value="P:regulation of double-strand break repair via homologous recombination"/>
    <property type="evidence" value="ECO:0000315"/>
    <property type="project" value="MGI"/>
</dbReference>
<dbReference type="GO" id="GO:0032880">
    <property type="term" value="P:regulation of protein localization"/>
    <property type="evidence" value="ECO:0000315"/>
    <property type="project" value="MGI"/>
</dbReference>
<dbReference type="GO" id="GO:0007283">
    <property type="term" value="P:spermatogenesis"/>
    <property type="evidence" value="ECO:0000315"/>
    <property type="project" value="MGI"/>
</dbReference>
<dbReference type="GO" id="GO:0007130">
    <property type="term" value="P:synaptonemal complex assembly"/>
    <property type="evidence" value="ECO:0000315"/>
    <property type="project" value="MGI"/>
</dbReference>
<dbReference type="GO" id="GO:0010526">
    <property type="term" value="P:transposable element silencing"/>
    <property type="evidence" value="ECO:0000315"/>
    <property type="project" value="UniProtKB"/>
</dbReference>
<dbReference type="GO" id="GO:0141196">
    <property type="term" value="P:transposable element silencing by piRNA-mediated DNA methylation"/>
    <property type="evidence" value="ECO:0000315"/>
    <property type="project" value="UniProtKB"/>
</dbReference>
<dbReference type="InterPro" id="IPR026616">
    <property type="entry name" value="TEX15"/>
</dbReference>
<dbReference type="InterPro" id="IPR032765">
    <property type="entry name" value="TEX15_dom"/>
</dbReference>
<dbReference type="PANTHER" id="PTHR22380">
    <property type="entry name" value="TESTIS-EXPRESSED PROTEIN 15"/>
    <property type="match status" value="1"/>
</dbReference>
<dbReference type="PANTHER" id="PTHR22380:SF1">
    <property type="entry name" value="TESTIS-EXPRESSED PROTEIN 15"/>
    <property type="match status" value="1"/>
</dbReference>
<dbReference type="Pfam" id="PF15326">
    <property type="entry name" value="TEX15"/>
    <property type="match status" value="2"/>
</dbReference>
<evidence type="ECO:0000250" key="1">
    <source>
        <dbReference type="UniProtKB" id="Q9BXT5"/>
    </source>
</evidence>
<evidence type="ECO:0000256" key="2">
    <source>
        <dbReference type="SAM" id="MobiDB-lite"/>
    </source>
</evidence>
<evidence type="ECO:0000269" key="3">
    <source>
    </source>
</evidence>
<evidence type="ECO:0000269" key="4">
    <source>
    </source>
</evidence>
<evidence type="ECO:0000269" key="5">
    <source>
    </source>
</evidence>
<evidence type="ECO:0000269" key="6">
    <source>
    </source>
</evidence>
<evidence type="ECO:0000305" key="7"/>
<evidence type="ECO:0000312" key="8">
    <source>
        <dbReference type="EMBL" id="AAK31968.1"/>
    </source>
</evidence>
<evidence type="ECO:0000312" key="9">
    <source>
        <dbReference type="EMBL" id="BAE21290.1"/>
    </source>
</evidence>
<evidence type="ECO:0000312" key="10">
    <source>
        <dbReference type="EMBL" id="BAE25339.1"/>
    </source>
</evidence>
<evidence type="ECO:0000312" key="11">
    <source>
        <dbReference type="MGI" id="MGI:1934816"/>
    </source>
</evidence>
<evidence type="ECO:0000312" key="12">
    <source>
        <dbReference type="Proteomes" id="UP000000589"/>
    </source>
</evidence>
<protein>
    <recommendedName>
        <fullName evidence="1">Testis-expressed protein 15</fullName>
    </recommendedName>
</protein>
<name>TEX15_MOUSE</name>
<proteinExistence type="evidence at protein level"/>
<feature type="chain" id="PRO_0000435484" description="Testis-expressed protein 15">
    <location>
        <begin position="1"/>
        <end position="2785"/>
    </location>
</feature>
<feature type="region of interest" description="Disordered" evidence="2">
    <location>
        <begin position="262"/>
        <end position="331"/>
    </location>
</feature>
<feature type="region of interest" description="Disordered" evidence="2">
    <location>
        <begin position="596"/>
        <end position="620"/>
    </location>
</feature>
<feature type="region of interest" description="Disordered" evidence="2">
    <location>
        <begin position="661"/>
        <end position="683"/>
    </location>
</feature>
<feature type="region of interest" description="Disordered" evidence="2">
    <location>
        <begin position="904"/>
        <end position="924"/>
    </location>
</feature>
<feature type="region of interest" description="Disordered" evidence="2">
    <location>
        <begin position="943"/>
        <end position="1064"/>
    </location>
</feature>
<feature type="region of interest" description="Disordered" evidence="2">
    <location>
        <begin position="2276"/>
        <end position="2458"/>
    </location>
</feature>
<feature type="region of interest" description="Disordered" evidence="2">
    <location>
        <begin position="2470"/>
        <end position="2511"/>
    </location>
</feature>
<feature type="region of interest" description="Disordered" evidence="2">
    <location>
        <begin position="2571"/>
        <end position="2601"/>
    </location>
</feature>
<feature type="compositionally biased region" description="Low complexity" evidence="2">
    <location>
        <begin position="262"/>
        <end position="274"/>
    </location>
</feature>
<feature type="compositionally biased region" description="Basic and acidic residues" evidence="2">
    <location>
        <begin position="275"/>
        <end position="286"/>
    </location>
</feature>
<feature type="compositionally biased region" description="Polar residues" evidence="2">
    <location>
        <begin position="314"/>
        <end position="331"/>
    </location>
</feature>
<feature type="compositionally biased region" description="Basic and acidic residues" evidence="2">
    <location>
        <begin position="596"/>
        <end position="611"/>
    </location>
</feature>
<feature type="compositionally biased region" description="Polar residues" evidence="2">
    <location>
        <begin position="962"/>
        <end position="989"/>
    </location>
</feature>
<feature type="compositionally biased region" description="Polar residues" evidence="2">
    <location>
        <begin position="1021"/>
        <end position="1031"/>
    </location>
</feature>
<feature type="compositionally biased region" description="Basic and acidic residues" evidence="2">
    <location>
        <begin position="1033"/>
        <end position="1042"/>
    </location>
</feature>
<feature type="compositionally biased region" description="Polar residues" evidence="2">
    <location>
        <begin position="1049"/>
        <end position="1064"/>
    </location>
</feature>
<feature type="compositionally biased region" description="Polar residues" evidence="2">
    <location>
        <begin position="2291"/>
        <end position="2314"/>
    </location>
</feature>
<feature type="compositionally biased region" description="Polar residues" evidence="2">
    <location>
        <begin position="2327"/>
        <end position="2338"/>
    </location>
</feature>
<feature type="compositionally biased region" description="Polar residues" evidence="2">
    <location>
        <begin position="2353"/>
        <end position="2387"/>
    </location>
</feature>
<feature type="compositionally biased region" description="Polar residues" evidence="2">
    <location>
        <begin position="2394"/>
        <end position="2415"/>
    </location>
</feature>
<feature type="compositionally biased region" description="Polar residues" evidence="2">
    <location>
        <begin position="2431"/>
        <end position="2454"/>
    </location>
</feature>
<feature type="compositionally biased region" description="Polar residues" evidence="2">
    <location>
        <begin position="2491"/>
        <end position="2502"/>
    </location>
</feature>
<feature type="compositionally biased region" description="Polar residues" evidence="2">
    <location>
        <begin position="2585"/>
        <end position="2601"/>
    </location>
</feature>
<feature type="splice variant" id="VSP_058101" description="In isoform 2.">
    <original>MTYFFIYVST</original>
    <variation>MDAEASAGKKFTIPKIRRTTEKVYLSSCYTNTREYGFIHGTLKQCRLDMSCDLQFTWQFGETKLVRNEYLEKQFAAKRSEMREGGRHSRELEEHFCFLALPQADVMDVYQNGLSVGTSPLRILGNPLLGVYLCRHVDIALSHACSRSVAVESIMIFKVLFGRIKKIQPSMDKNKVSLDPSPNFDCHMSRNMPSLKDTIELQAYNSMVYFYEYDYFSRPVDKPRQCLPYAIVTVKCIGQKAGNGQLITSLRFSSTGFPKRL</variation>
    <location>
        <begin position="1"/>
        <end position="10"/>
    </location>
</feature>
<feature type="sequence conflict" description="In Ref. 1; AAK31968." evidence="7" ref="1">
    <original>S</original>
    <variation>T</variation>
    <location>
        <position position="693"/>
    </location>
</feature>
<feature type="sequence conflict" description="In Ref. 1; AAK31968." evidence="7" ref="1">
    <original>A</original>
    <variation>G</variation>
    <location>
        <position position="792"/>
    </location>
</feature>
<feature type="sequence conflict" description="In Ref. 1; AAK31968." evidence="7" ref="1">
    <original>K</original>
    <variation>R</variation>
    <location>
        <position position="1169"/>
    </location>
</feature>
<feature type="sequence conflict" description="In Ref. 1; AAK31968." evidence="7" ref="1">
    <original>L</original>
    <variation>P</variation>
    <location>
        <position position="1826"/>
    </location>
</feature>
<feature type="sequence conflict" description="In Ref. 1; AAK31968." evidence="7" ref="1">
    <original>R</original>
    <variation>S</variation>
    <location>
        <position position="1939"/>
    </location>
</feature>
<feature type="sequence conflict" description="In Ref. 1; AAK31968." evidence="7" ref="1">
    <original>P</original>
    <variation>L</variation>
    <location>
        <position position="2589"/>
    </location>
</feature>
<feature type="sequence conflict" description="In Ref. 1; AAK31968." evidence="7" ref="1">
    <original>T</original>
    <variation>P</variation>
    <location>
        <position position="2626"/>
    </location>
</feature>
<feature type="sequence conflict" description="In Ref. 1; AAK31968." evidence="7" ref="1">
    <original>A</original>
    <variation>T</variation>
    <location>
        <position position="2678"/>
    </location>
</feature>
<feature type="sequence conflict" description="In Ref. 1; AAK31968." evidence="7" ref="1">
    <original>A</original>
    <variation>V</variation>
    <location>
        <position position="2765"/>
    </location>
</feature>
<comment type="function">
    <text evidence="4 5 6">Required during spermatogenesis for normal chromosome synapsis and meiotic recombination in germ cells. Necessary for formation of DMC1 and RAD51 foci on meiotic chromosomes, suggesting a specific role in DNA double-stranded break repair (PubMed:18283110). Essential executor of PIWIL4-piRNA pathway directed transposon DNA methylation and silencing in the male embryonic germ cells (PubMed:32381626, PubMed:32719317). PIWIL4-piRNA binds to nascent transposon transcripts and interacts with TEX15, which may in turn recruit the epigenetic silencing machinery to the transposon loci (PubMed:32381626). Not required for piRNA biosynthesis (PubMed:32381626, PubMed:32719317).</text>
</comment>
<comment type="subunit">
    <text evidence="5 6">Interacts with PIWIL4 (PubMed:32719317). Interacts with PIWIL2 (PubMed:32381626).</text>
</comment>
<comment type="subcellular location">
    <subcellularLocation>
        <location evidence="4 5">Cytoplasm</location>
    </subcellularLocation>
    <subcellularLocation>
        <location evidence="4 5 6">Nucleus</location>
    </subcellularLocation>
</comment>
<comment type="alternative products">
    <event type="alternative splicing"/>
    <isoform>
        <id>F8VPN2-1</id>
        <name evidence="7">1</name>
        <sequence type="displayed"/>
    </isoform>
    <isoform>
        <id>F8VPN2-2</id>
        <name evidence="7">2</name>
        <sequence type="described" ref="VSP_058101"/>
    </isoform>
</comment>
<comment type="tissue specificity">
    <text evidence="3 5 6">Detected in testis and ovary, and at lower levels in lung and brain.</text>
</comment>
<comment type="developmental stage">
    <text evidence="5 6">Highly expressed in embryonic male germ cells at embryonic days 16.5 dpc and 18.5 dpc and expression increases at postnatal day 2.5.</text>
</comment>
<comment type="disruption phenotype">
    <text evidence="4 5 6">Viable with no gross phenotype. Male mice are infertile with significantly reduced testis size, while females are fertile. Severe depletion of germ cells in seminiferous tubules and epididymal tubules, due to meiotic arrest (PubMed:18283110, PubMed:32381626, PubMed:32719317). Male germ cells show derepression of transposable elements (TEs) and severe DNA hypomethylation of TEs (PubMed:32381626, PubMed:32719317).</text>
</comment>
<comment type="similarity">
    <text evidence="7">Belongs to the TEX15 family.</text>
</comment>
<organism evidence="12">
    <name type="scientific">Mus musculus</name>
    <name type="common">Mouse</name>
    <dbReference type="NCBI Taxonomy" id="10090"/>
    <lineage>
        <taxon>Eukaryota</taxon>
        <taxon>Metazoa</taxon>
        <taxon>Chordata</taxon>
        <taxon>Craniata</taxon>
        <taxon>Vertebrata</taxon>
        <taxon>Euteleostomi</taxon>
        <taxon>Mammalia</taxon>
        <taxon>Eutheria</taxon>
        <taxon>Euarchontoglires</taxon>
        <taxon>Glires</taxon>
        <taxon>Rodentia</taxon>
        <taxon>Myomorpha</taxon>
        <taxon>Muroidea</taxon>
        <taxon>Muridae</taxon>
        <taxon>Murinae</taxon>
        <taxon>Mus</taxon>
        <taxon>Mus</taxon>
    </lineage>
</organism>